<feature type="chain" id="PRO_1000193019" description="Phosphoribosylformylglycinamidine cyclo-ligase">
    <location>
        <begin position="1"/>
        <end position="345"/>
    </location>
</feature>
<proteinExistence type="inferred from homology"/>
<reference key="1">
    <citation type="journal article" date="2009" name="PLoS Genet.">
        <title>Organised genome dynamics in the Escherichia coli species results in highly diverse adaptive paths.</title>
        <authorList>
            <person name="Touchon M."/>
            <person name="Hoede C."/>
            <person name="Tenaillon O."/>
            <person name="Barbe V."/>
            <person name="Baeriswyl S."/>
            <person name="Bidet P."/>
            <person name="Bingen E."/>
            <person name="Bonacorsi S."/>
            <person name="Bouchier C."/>
            <person name="Bouvet O."/>
            <person name="Calteau A."/>
            <person name="Chiapello H."/>
            <person name="Clermont O."/>
            <person name="Cruveiller S."/>
            <person name="Danchin A."/>
            <person name="Diard M."/>
            <person name="Dossat C."/>
            <person name="Karoui M.E."/>
            <person name="Frapy E."/>
            <person name="Garry L."/>
            <person name="Ghigo J.M."/>
            <person name="Gilles A.M."/>
            <person name="Johnson J."/>
            <person name="Le Bouguenec C."/>
            <person name="Lescat M."/>
            <person name="Mangenot S."/>
            <person name="Martinez-Jehanne V."/>
            <person name="Matic I."/>
            <person name="Nassif X."/>
            <person name="Oztas S."/>
            <person name="Petit M.A."/>
            <person name="Pichon C."/>
            <person name="Rouy Z."/>
            <person name="Ruf C.S."/>
            <person name="Schneider D."/>
            <person name="Tourret J."/>
            <person name="Vacherie B."/>
            <person name="Vallenet D."/>
            <person name="Medigue C."/>
            <person name="Rocha E.P.C."/>
            <person name="Denamur E."/>
        </authorList>
    </citation>
    <scope>NUCLEOTIDE SEQUENCE [LARGE SCALE GENOMIC DNA]</scope>
    <source>
        <strain>UMN026 / ExPEC</strain>
    </source>
</reference>
<evidence type="ECO:0000255" key="1">
    <source>
        <dbReference type="HAMAP-Rule" id="MF_00741"/>
    </source>
</evidence>
<dbReference type="EC" id="6.3.3.1" evidence="1"/>
<dbReference type="EMBL" id="CU928163">
    <property type="protein sequence ID" value="CAR13990.1"/>
    <property type="molecule type" value="Genomic_DNA"/>
</dbReference>
<dbReference type="RefSeq" id="WP_001295474.1">
    <property type="nucleotide sequence ID" value="NC_011751.1"/>
</dbReference>
<dbReference type="RefSeq" id="YP_002413517.1">
    <property type="nucleotide sequence ID" value="NC_011751.1"/>
</dbReference>
<dbReference type="SMR" id="B7N681"/>
<dbReference type="STRING" id="585056.ECUMN_2813"/>
<dbReference type="GeneID" id="93774637"/>
<dbReference type="KEGG" id="eum:ECUMN_2813"/>
<dbReference type="PATRIC" id="fig|585056.7.peg.2997"/>
<dbReference type="HOGENOM" id="CLU_047116_0_0_6"/>
<dbReference type="UniPathway" id="UPA00074">
    <property type="reaction ID" value="UER00129"/>
</dbReference>
<dbReference type="Proteomes" id="UP000007097">
    <property type="component" value="Chromosome"/>
</dbReference>
<dbReference type="GO" id="GO:0005829">
    <property type="term" value="C:cytosol"/>
    <property type="evidence" value="ECO:0007669"/>
    <property type="project" value="TreeGrafter"/>
</dbReference>
<dbReference type="GO" id="GO:0005524">
    <property type="term" value="F:ATP binding"/>
    <property type="evidence" value="ECO:0007669"/>
    <property type="project" value="UniProtKB-KW"/>
</dbReference>
<dbReference type="GO" id="GO:0004637">
    <property type="term" value="F:phosphoribosylamine-glycine ligase activity"/>
    <property type="evidence" value="ECO:0007669"/>
    <property type="project" value="TreeGrafter"/>
</dbReference>
<dbReference type="GO" id="GO:0004641">
    <property type="term" value="F:phosphoribosylformylglycinamidine cyclo-ligase activity"/>
    <property type="evidence" value="ECO:0007669"/>
    <property type="project" value="UniProtKB-UniRule"/>
</dbReference>
<dbReference type="GO" id="GO:0006189">
    <property type="term" value="P:'de novo' IMP biosynthetic process"/>
    <property type="evidence" value="ECO:0007669"/>
    <property type="project" value="UniProtKB-UniRule"/>
</dbReference>
<dbReference type="GO" id="GO:0046084">
    <property type="term" value="P:adenine biosynthetic process"/>
    <property type="evidence" value="ECO:0007669"/>
    <property type="project" value="TreeGrafter"/>
</dbReference>
<dbReference type="CDD" id="cd02196">
    <property type="entry name" value="PurM"/>
    <property type="match status" value="1"/>
</dbReference>
<dbReference type="FunFam" id="3.30.1330.10:FF:000001">
    <property type="entry name" value="Phosphoribosylformylglycinamidine cyclo-ligase"/>
    <property type="match status" value="1"/>
</dbReference>
<dbReference type="FunFam" id="3.90.650.10:FF:000001">
    <property type="entry name" value="Phosphoribosylformylglycinamidine cyclo-ligase"/>
    <property type="match status" value="1"/>
</dbReference>
<dbReference type="Gene3D" id="3.90.650.10">
    <property type="entry name" value="PurM-like C-terminal domain"/>
    <property type="match status" value="1"/>
</dbReference>
<dbReference type="Gene3D" id="3.30.1330.10">
    <property type="entry name" value="PurM-like, N-terminal domain"/>
    <property type="match status" value="1"/>
</dbReference>
<dbReference type="HAMAP" id="MF_00741">
    <property type="entry name" value="AIRS"/>
    <property type="match status" value="1"/>
</dbReference>
<dbReference type="InterPro" id="IPR010918">
    <property type="entry name" value="PurM-like_C_dom"/>
</dbReference>
<dbReference type="InterPro" id="IPR036676">
    <property type="entry name" value="PurM-like_C_sf"/>
</dbReference>
<dbReference type="InterPro" id="IPR016188">
    <property type="entry name" value="PurM-like_N"/>
</dbReference>
<dbReference type="InterPro" id="IPR036921">
    <property type="entry name" value="PurM-like_N_sf"/>
</dbReference>
<dbReference type="InterPro" id="IPR004733">
    <property type="entry name" value="PurM_cligase"/>
</dbReference>
<dbReference type="NCBIfam" id="TIGR00878">
    <property type="entry name" value="purM"/>
    <property type="match status" value="1"/>
</dbReference>
<dbReference type="PANTHER" id="PTHR10520:SF12">
    <property type="entry name" value="TRIFUNCTIONAL PURINE BIOSYNTHETIC PROTEIN ADENOSINE-3"/>
    <property type="match status" value="1"/>
</dbReference>
<dbReference type="PANTHER" id="PTHR10520">
    <property type="entry name" value="TRIFUNCTIONAL PURINE BIOSYNTHETIC PROTEIN ADENOSINE-3-RELATED"/>
    <property type="match status" value="1"/>
</dbReference>
<dbReference type="Pfam" id="PF00586">
    <property type="entry name" value="AIRS"/>
    <property type="match status" value="1"/>
</dbReference>
<dbReference type="Pfam" id="PF02769">
    <property type="entry name" value="AIRS_C"/>
    <property type="match status" value="1"/>
</dbReference>
<dbReference type="SUPFAM" id="SSF56042">
    <property type="entry name" value="PurM C-terminal domain-like"/>
    <property type="match status" value="1"/>
</dbReference>
<dbReference type="SUPFAM" id="SSF55326">
    <property type="entry name" value="PurM N-terminal domain-like"/>
    <property type="match status" value="1"/>
</dbReference>
<gene>
    <name evidence="1" type="primary">purM</name>
    <name type="ordered locus">ECUMN_2813</name>
</gene>
<name>PUR5_ECOLU</name>
<organism>
    <name type="scientific">Escherichia coli O17:K52:H18 (strain UMN026 / ExPEC)</name>
    <dbReference type="NCBI Taxonomy" id="585056"/>
    <lineage>
        <taxon>Bacteria</taxon>
        <taxon>Pseudomonadati</taxon>
        <taxon>Pseudomonadota</taxon>
        <taxon>Gammaproteobacteria</taxon>
        <taxon>Enterobacterales</taxon>
        <taxon>Enterobacteriaceae</taxon>
        <taxon>Escherichia</taxon>
    </lineage>
</organism>
<comment type="catalytic activity">
    <reaction evidence="1">
        <text>2-formamido-N(1)-(5-O-phospho-beta-D-ribosyl)acetamidine + ATP = 5-amino-1-(5-phospho-beta-D-ribosyl)imidazole + ADP + phosphate + H(+)</text>
        <dbReference type="Rhea" id="RHEA:23032"/>
        <dbReference type="ChEBI" id="CHEBI:15378"/>
        <dbReference type="ChEBI" id="CHEBI:30616"/>
        <dbReference type="ChEBI" id="CHEBI:43474"/>
        <dbReference type="ChEBI" id="CHEBI:137981"/>
        <dbReference type="ChEBI" id="CHEBI:147287"/>
        <dbReference type="ChEBI" id="CHEBI:456216"/>
        <dbReference type="EC" id="6.3.3.1"/>
    </reaction>
</comment>
<comment type="pathway">
    <text evidence="1">Purine metabolism; IMP biosynthesis via de novo pathway; 5-amino-1-(5-phospho-D-ribosyl)imidazole from N(2)-formyl-N(1)-(5-phospho-D-ribosyl)glycinamide: step 2/2.</text>
</comment>
<comment type="subcellular location">
    <subcellularLocation>
        <location evidence="1">Cytoplasm</location>
    </subcellularLocation>
</comment>
<comment type="similarity">
    <text evidence="1">Belongs to the AIR synthase family.</text>
</comment>
<accession>B7N681</accession>
<keyword id="KW-0067">ATP-binding</keyword>
<keyword id="KW-0963">Cytoplasm</keyword>
<keyword id="KW-0436">Ligase</keyword>
<keyword id="KW-0547">Nucleotide-binding</keyword>
<keyword id="KW-0658">Purine biosynthesis</keyword>
<sequence length="345" mass="36873">MTDKTSLSYKDAGVDIDAGNALVGRIKGVVKKTRRPEVMGGLGGFGALCALPQKYREPVLVSGTDGVGTKLRLAMDLKRHDTIGIDLVAMCVNDLVVQGAEPLFFLDYYATGKLDVDTASAVISGIAEGCLQSGCSLVGGETAEMPGMYHGEDYDVAGFCVGVVEKSEIIDGSKVSDGDVLIALGSSGPHSNGYSLVRKILEVSGCDPQTTELDGKPLADHLLAPTRIYVKSVLELIEKVDVHAIAHLTGGGFWENIPRVLPDNTQAVIDESSWQWPEVFNWLQTAGNVERHEMYRTFNCGVGMIIALPAPEVDKALALLNANGENAWKIGIIKASDSEQRVVIE</sequence>
<protein>
    <recommendedName>
        <fullName evidence="1">Phosphoribosylformylglycinamidine cyclo-ligase</fullName>
        <ecNumber evidence="1">6.3.3.1</ecNumber>
    </recommendedName>
    <alternativeName>
        <fullName evidence="1">AIR synthase</fullName>
    </alternativeName>
    <alternativeName>
        <fullName evidence="1">AIRS</fullName>
    </alternativeName>
    <alternativeName>
        <fullName evidence="1">Phosphoribosyl-aminoimidazole synthetase</fullName>
    </alternativeName>
</protein>